<keyword id="KW-0067">ATP-binding</keyword>
<keyword id="KW-0963">Cytoplasm</keyword>
<keyword id="KW-0227">DNA damage</keyword>
<keyword id="KW-0228">DNA excision</keyword>
<keyword id="KW-0234">DNA repair</keyword>
<keyword id="KW-0238">DNA-binding</keyword>
<keyword id="KW-0267">Excision nuclease</keyword>
<keyword id="KW-0479">Metal-binding</keyword>
<keyword id="KW-0547">Nucleotide-binding</keyword>
<keyword id="KW-0677">Repeat</keyword>
<keyword id="KW-0742">SOS response</keyword>
<keyword id="KW-0862">Zinc</keyword>
<keyword id="KW-0863">Zinc-finger</keyword>
<name>UVRA_RHILO</name>
<feature type="chain" id="PRO_0000093081" description="UvrABC system protein A">
    <location>
        <begin position="1"/>
        <end position="973"/>
    </location>
</feature>
<feature type="domain" description="ABC transporter 1" evidence="1">
    <location>
        <begin position="330"/>
        <end position="609"/>
    </location>
</feature>
<feature type="domain" description="ABC transporter 2" evidence="1">
    <location>
        <begin position="629"/>
        <end position="958"/>
    </location>
</feature>
<feature type="zinc finger region" description="C4-type" evidence="1">
    <location>
        <begin position="761"/>
        <end position="787"/>
    </location>
</feature>
<feature type="binding site" evidence="1">
    <location>
        <begin position="34"/>
        <end position="41"/>
    </location>
    <ligand>
        <name>ATP</name>
        <dbReference type="ChEBI" id="CHEBI:30616"/>
    </ligand>
</feature>
<feature type="binding site" evidence="1">
    <location>
        <begin position="662"/>
        <end position="669"/>
    </location>
    <ligand>
        <name>ATP</name>
        <dbReference type="ChEBI" id="CHEBI:30616"/>
    </ligand>
</feature>
<comment type="function">
    <text evidence="1">The UvrABC repair system catalyzes the recognition and processing of DNA lesions. UvrA is an ATPase and a DNA-binding protein. A damage recognition complex composed of 2 UvrA and 2 UvrB subunits scans DNA for abnormalities. When the presence of a lesion has been verified by UvrB, the UvrA molecules dissociate.</text>
</comment>
<comment type="subunit">
    <text evidence="1">Forms a heterotetramer with UvrB during the search for lesions.</text>
</comment>
<comment type="subcellular location">
    <subcellularLocation>
        <location evidence="1">Cytoplasm</location>
    </subcellularLocation>
</comment>
<comment type="similarity">
    <text evidence="1">Belongs to the ABC transporter superfamily. UvrA family.</text>
</comment>
<reference key="1">
    <citation type="journal article" date="2000" name="DNA Res.">
        <title>Complete genome structure of the nitrogen-fixing symbiotic bacterium Mesorhizobium loti.</title>
        <authorList>
            <person name="Kaneko T."/>
            <person name="Nakamura Y."/>
            <person name="Sato S."/>
            <person name="Asamizu E."/>
            <person name="Kato T."/>
            <person name="Sasamoto S."/>
            <person name="Watanabe A."/>
            <person name="Idesawa K."/>
            <person name="Ishikawa A."/>
            <person name="Kawashima K."/>
            <person name="Kimura T."/>
            <person name="Kishida Y."/>
            <person name="Kiyokawa C."/>
            <person name="Kohara M."/>
            <person name="Matsumoto M."/>
            <person name="Matsuno A."/>
            <person name="Mochizuki Y."/>
            <person name="Nakayama S."/>
            <person name="Nakazaki N."/>
            <person name="Shimpo S."/>
            <person name="Sugimoto M."/>
            <person name="Takeuchi C."/>
            <person name="Yamada M."/>
            <person name="Tabata S."/>
        </authorList>
    </citation>
    <scope>NUCLEOTIDE SEQUENCE [LARGE SCALE GENOMIC DNA]</scope>
    <source>
        <strain>LMG 29417 / CECT 9101 / MAFF 303099</strain>
    </source>
</reference>
<protein>
    <recommendedName>
        <fullName evidence="1">UvrABC system protein A</fullName>
        <shortName evidence="1">UvrA protein</shortName>
    </recommendedName>
    <alternativeName>
        <fullName evidence="1">Excinuclease ABC subunit A</fullName>
    </alternativeName>
</protein>
<dbReference type="EMBL" id="BA000012">
    <property type="protein sequence ID" value="BAB48277.1"/>
    <property type="molecule type" value="Genomic_DNA"/>
</dbReference>
<dbReference type="RefSeq" id="WP_010909632.1">
    <property type="nucleotide sequence ID" value="NC_002678.2"/>
</dbReference>
<dbReference type="SMR" id="Q98M36"/>
<dbReference type="GeneID" id="66683902"/>
<dbReference type="KEGG" id="mlo:mlr0750"/>
<dbReference type="eggNOG" id="COG0178">
    <property type="taxonomic scope" value="Bacteria"/>
</dbReference>
<dbReference type="HOGENOM" id="CLU_001370_0_2_5"/>
<dbReference type="Proteomes" id="UP000000552">
    <property type="component" value="Chromosome"/>
</dbReference>
<dbReference type="GO" id="GO:0005737">
    <property type="term" value="C:cytoplasm"/>
    <property type="evidence" value="ECO:0007669"/>
    <property type="project" value="UniProtKB-SubCell"/>
</dbReference>
<dbReference type="GO" id="GO:0009380">
    <property type="term" value="C:excinuclease repair complex"/>
    <property type="evidence" value="ECO:0007669"/>
    <property type="project" value="InterPro"/>
</dbReference>
<dbReference type="GO" id="GO:0005524">
    <property type="term" value="F:ATP binding"/>
    <property type="evidence" value="ECO:0007669"/>
    <property type="project" value="UniProtKB-UniRule"/>
</dbReference>
<dbReference type="GO" id="GO:0016887">
    <property type="term" value="F:ATP hydrolysis activity"/>
    <property type="evidence" value="ECO:0007669"/>
    <property type="project" value="InterPro"/>
</dbReference>
<dbReference type="GO" id="GO:0003677">
    <property type="term" value="F:DNA binding"/>
    <property type="evidence" value="ECO:0007669"/>
    <property type="project" value="UniProtKB-UniRule"/>
</dbReference>
<dbReference type="GO" id="GO:0009381">
    <property type="term" value="F:excinuclease ABC activity"/>
    <property type="evidence" value="ECO:0007669"/>
    <property type="project" value="UniProtKB-UniRule"/>
</dbReference>
<dbReference type="GO" id="GO:0008270">
    <property type="term" value="F:zinc ion binding"/>
    <property type="evidence" value="ECO:0007669"/>
    <property type="project" value="UniProtKB-UniRule"/>
</dbReference>
<dbReference type="GO" id="GO:0006289">
    <property type="term" value="P:nucleotide-excision repair"/>
    <property type="evidence" value="ECO:0007669"/>
    <property type="project" value="UniProtKB-UniRule"/>
</dbReference>
<dbReference type="GO" id="GO:0009432">
    <property type="term" value="P:SOS response"/>
    <property type="evidence" value="ECO:0007669"/>
    <property type="project" value="UniProtKB-UniRule"/>
</dbReference>
<dbReference type="CDD" id="cd03270">
    <property type="entry name" value="ABC_UvrA_I"/>
    <property type="match status" value="1"/>
</dbReference>
<dbReference type="CDD" id="cd03271">
    <property type="entry name" value="ABC_UvrA_II"/>
    <property type="match status" value="1"/>
</dbReference>
<dbReference type="FunFam" id="1.20.1580.10:FF:000002">
    <property type="entry name" value="UvrABC system protein A"/>
    <property type="match status" value="1"/>
</dbReference>
<dbReference type="Gene3D" id="1.10.8.280">
    <property type="entry name" value="ABC transporter ATPase domain-like"/>
    <property type="match status" value="1"/>
</dbReference>
<dbReference type="Gene3D" id="1.20.1580.10">
    <property type="entry name" value="ABC transporter ATPase like domain"/>
    <property type="match status" value="2"/>
</dbReference>
<dbReference type="Gene3D" id="3.30.1490.20">
    <property type="entry name" value="ATP-grasp fold, A domain"/>
    <property type="match status" value="1"/>
</dbReference>
<dbReference type="Gene3D" id="3.40.50.300">
    <property type="entry name" value="P-loop containing nucleotide triphosphate hydrolases"/>
    <property type="match status" value="2"/>
</dbReference>
<dbReference type="HAMAP" id="MF_00205">
    <property type="entry name" value="UvrA"/>
    <property type="match status" value="1"/>
</dbReference>
<dbReference type="InterPro" id="IPR003439">
    <property type="entry name" value="ABC_transporter-like_ATP-bd"/>
</dbReference>
<dbReference type="InterPro" id="IPR017871">
    <property type="entry name" value="ABC_transporter-like_CS"/>
</dbReference>
<dbReference type="InterPro" id="IPR013815">
    <property type="entry name" value="ATP_grasp_subdomain_1"/>
</dbReference>
<dbReference type="InterPro" id="IPR027417">
    <property type="entry name" value="P-loop_NTPase"/>
</dbReference>
<dbReference type="InterPro" id="IPR004602">
    <property type="entry name" value="UvrA"/>
</dbReference>
<dbReference type="InterPro" id="IPR041552">
    <property type="entry name" value="UvrA_DNA-bd"/>
</dbReference>
<dbReference type="InterPro" id="IPR041102">
    <property type="entry name" value="UvrA_inter"/>
</dbReference>
<dbReference type="NCBIfam" id="NF001503">
    <property type="entry name" value="PRK00349.1"/>
    <property type="match status" value="1"/>
</dbReference>
<dbReference type="NCBIfam" id="TIGR00630">
    <property type="entry name" value="uvra"/>
    <property type="match status" value="1"/>
</dbReference>
<dbReference type="PANTHER" id="PTHR43152">
    <property type="entry name" value="UVRABC SYSTEM PROTEIN A"/>
    <property type="match status" value="1"/>
</dbReference>
<dbReference type="PANTHER" id="PTHR43152:SF3">
    <property type="entry name" value="UVRABC SYSTEM PROTEIN A"/>
    <property type="match status" value="1"/>
</dbReference>
<dbReference type="Pfam" id="PF00005">
    <property type="entry name" value="ABC_tran"/>
    <property type="match status" value="1"/>
</dbReference>
<dbReference type="Pfam" id="PF17755">
    <property type="entry name" value="UvrA_DNA-bind"/>
    <property type="match status" value="1"/>
</dbReference>
<dbReference type="Pfam" id="PF17760">
    <property type="entry name" value="UvrA_inter"/>
    <property type="match status" value="1"/>
</dbReference>
<dbReference type="SUPFAM" id="SSF52540">
    <property type="entry name" value="P-loop containing nucleoside triphosphate hydrolases"/>
    <property type="match status" value="2"/>
</dbReference>
<dbReference type="PROSITE" id="PS00211">
    <property type="entry name" value="ABC_TRANSPORTER_1"/>
    <property type="match status" value="2"/>
</dbReference>
<dbReference type="PROSITE" id="PS50893">
    <property type="entry name" value="ABC_TRANSPORTER_2"/>
    <property type="match status" value="1"/>
</dbReference>
<organism>
    <name type="scientific">Mesorhizobium japonicum (strain LMG 29417 / CECT 9101 / MAFF 303099)</name>
    <name type="common">Mesorhizobium loti (strain MAFF 303099)</name>
    <dbReference type="NCBI Taxonomy" id="266835"/>
    <lineage>
        <taxon>Bacteria</taxon>
        <taxon>Pseudomonadati</taxon>
        <taxon>Pseudomonadota</taxon>
        <taxon>Alphaproteobacteria</taxon>
        <taxon>Hyphomicrobiales</taxon>
        <taxon>Phyllobacteriaceae</taxon>
        <taxon>Mesorhizobium</taxon>
    </lineage>
</organism>
<gene>
    <name evidence="1" type="primary">uvrA</name>
    <name type="ordered locus">mlr0750</name>
</gene>
<sequence>MADHKFLSIRGAREHNLKNVDLDLPRDSLIVMTGLSGSGKSSLAFDTIYAEGQRRYVESLSAYARQFLEMMQKPDVDQIDGLSPAISIEQKTTSKNPRSTVGTVTEIYDYMRLLFARVGVPYSPATGLPIESQTVSQMVDRVLALEEGTRLFLLAPIVRGRKGEYRKELLELQKKGFQRVKVDGVFYEIADVPALDKKYKHDIDVVVDRIVVRGDLATRLADSIETALKLAEGLAVAEFADKPLDSSQTGEDSVNKSKNETHERILFSEKFACPVSGFTIPEIEPRLFSFNNPFGACPTCDGLGSQRAIDPNLVVPDENVSLRDGAVSPWAKSTSPYYVQTLEALGKAYNFKLGDKFKDLSAEAQDAILRGTGEREVTFQYDDGLRSYKTTKTFEGVIPNLERRWKETESAWMREEIERFMSATPCPVCKGYRLKPEALAVKIGGKHIGEVTEQSIRNADKWFTDLPAQLNDKQNEIAVRVLKEIRERLRFLNDVGLDYLTLSRNSGTLSGGESQRIRLASQIGSGLTGVLYVLDEPSIGLHQRDNTRLLDTLKHLRDIGNTVIVVEHDEDAILHADYVVDMGPAAGIHGGEIIAQGTPQQVMANPNSITGKYLSGALEVATPGVRREAKKNRRLKIVGARGNNLKNVTAEIPLGTFTAVTGVSGGGKSTFLIETLFKAASRRIMGSREHPAEHDRIEGLEFLDKVIDIDQSPIGRTPRSNPATYTGAFTPIRDWFAGLPEAKARGYQPGRFSFNVKGGRCEACQGDGVIKIEMHFLPDVYVTCDVCHGKRYNRETLDVLFKGKSIADVLDMTVEEGVDFFAAVPGVRDKLDTLKQVGLGYIHIGQQATTLSGGEAQRIKLAKELSRKATGKTLYILDEPTTGLHFHDVAKLLEVLHELVDQGNTVVVIEHNLEVIKTADWVLDLGPEGGDGGGELVAQGTPEAIVREKRSYTGQFLKELLERRPGGKREAAE</sequence>
<evidence type="ECO:0000255" key="1">
    <source>
        <dbReference type="HAMAP-Rule" id="MF_00205"/>
    </source>
</evidence>
<accession>Q98M36</accession>
<proteinExistence type="inferred from homology"/>